<protein>
    <recommendedName>
        <fullName evidence="1">5-methyltetrahydropteroyltriglutamate--homocysteine methyltransferase</fullName>
        <ecNumber evidence="1">2.1.1.14</ecNumber>
    </recommendedName>
    <alternativeName>
        <fullName evidence="1">Cobalamin-independent methionine synthase</fullName>
    </alternativeName>
    <alternativeName>
        <fullName evidence="1">Methionine synthase, vitamin-B12 independent isozyme</fullName>
    </alternativeName>
</protein>
<evidence type="ECO:0000255" key="1">
    <source>
        <dbReference type="HAMAP-Rule" id="MF_00172"/>
    </source>
</evidence>
<dbReference type="EC" id="2.1.1.14" evidence="1"/>
<dbReference type="EMBL" id="AM260480">
    <property type="protein sequence ID" value="CAJ96368.1"/>
    <property type="molecule type" value="Genomic_DNA"/>
</dbReference>
<dbReference type="RefSeq" id="WP_011617318.1">
    <property type="nucleotide sequence ID" value="NC_008314.1"/>
</dbReference>
<dbReference type="SMR" id="Q0K0V6"/>
<dbReference type="STRING" id="381666.H16_B1581"/>
<dbReference type="KEGG" id="reh:H16_B1581"/>
<dbReference type="eggNOG" id="COG0620">
    <property type="taxonomic scope" value="Bacteria"/>
</dbReference>
<dbReference type="HOGENOM" id="CLU_013175_0_0_4"/>
<dbReference type="OrthoDB" id="244285at2"/>
<dbReference type="UniPathway" id="UPA00051">
    <property type="reaction ID" value="UER00082"/>
</dbReference>
<dbReference type="Proteomes" id="UP000008210">
    <property type="component" value="Chromosome 2"/>
</dbReference>
<dbReference type="GO" id="GO:0003871">
    <property type="term" value="F:5-methyltetrahydropteroyltriglutamate-homocysteine S-methyltransferase activity"/>
    <property type="evidence" value="ECO:0007669"/>
    <property type="project" value="UniProtKB-UniRule"/>
</dbReference>
<dbReference type="GO" id="GO:0008270">
    <property type="term" value="F:zinc ion binding"/>
    <property type="evidence" value="ECO:0007669"/>
    <property type="project" value="InterPro"/>
</dbReference>
<dbReference type="GO" id="GO:0009086">
    <property type="term" value="P:methionine biosynthetic process"/>
    <property type="evidence" value="ECO:0007669"/>
    <property type="project" value="UniProtKB-UniRule"/>
</dbReference>
<dbReference type="GO" id="GO:0032259">
    <property type="term" value="P:methylation"/>
    <property type="evidence" value="ECO:0007669"/>
    <property type="project" value="UniProtKB-KW"/>
</dbReference>
<dbReference type="CDD" id="cd03311">
    <property type="entry name" value="CIMS_C_terminal_like"/>
    <property type="match status" value="1"/>
</dbReference>
<dbReference type="CDD" id="cd03312">
    <property type="entry name" value="CIMS_N_terminal_like"/>
    <property type="match status" value="1"/>
</dbReference>
<dbReference type="FunFam" id="3.20.20.210:FF:000002">
    <property type="entry name" value="5-methyltetrahydropteroyltriglutamate--homocysteine methyltransferase"/>
    <property type="match status" value="1"/>
</dbReference>
<dbReference type="Gene3D" id="3.20.20.210">
    <property type="match status" value="2"/>
</dbReference>
<dbReference type="HAMAP" id="MF_00172">
    <property type="entry name" value="Meth_synth"/>
    <property type="match status" value="1"/>
</dbReference>
<dbReference type="InterPro" id="IPR013215">
    <property type="entry name" value="Cbl-indep_Met_Synth_N"/>
</dbReference>
<dbReference type="InterPro" id="IPR006276">
    <property type="entry name" value="Cobalamin-indep_Met_synthase"/>
</dbReference>
<dbReference type="InterPro" id="IPR002629">
    <property type="entry name" value="Met_Synth_C/arc"/>
</dbReference>
<dbReference type="InterPro" id="IPR038071">
    <property type="entry name" value="UROD/MetE-like_sf"/>
</dbReference>
<dbReference type="NCBIfam" id="TIGR01371">
    <property type="entry name" value="met_syn_B12ind"/>
    <property type="match status" value="1"/>
</dbReference>
<dbReference type="NCBIfam" id="NF003556">
    <property type="entry name" value="PRK05222.1"/>
    <property type="match status" value="1"/>
</dbReference>
<dbReference type="PANTHER" id="PTHR30519">
    <property type="entry name" value="5-METHYLTETRAHYDROPTEROYLTRIGLUTAMATE--HOMOCYSTEINE METHYLTRANSFERASE"/>
    <property type="match status" value="1"/>
</dbReference>
<dbReference type="Pfam" id="PF08267">
    <property type="entry name" value="Meth_synt_1"/>
    <property type="match status" value="1"/>
</dbReference>
<dbReference type="Pfam" id="PF01717">
    <property type="entry name" value="Meth_synt_2"/>
    <property type="match status" value="1"/>
</dbReference>
<dbReference type="PIRSF" id="PIRSF000382">
    <property type="entry name" value="MeTrfase_B12_ind"/>
    <property type="match status" value="1"/>
</dbReference>
<dbReference type="SUPFAM" id="SSF51726">
    <property type="entry name" value="UROD/MetE-like"/>
    <property type="match status" value="2"/>
</dbReference>
<reference key="1">
    <citation type="journal article" date="2006" name="Nat. Biotechnol.">
        <title>Genome sequence of the bioplastic-producing 'Knallgas' bacterium Ralstonia eutropha H16.</title>
        <authorList>
            <person name="Pohlmann A."/>
            <person name="Fricke W.F."/>
            <person name="Reinecke F."/>
            <person name="Kusian B."/>
            <person name="Liesegang H."/>
            <person name="Cramm R."/>
            <person name="Eitinger T."/>
            <person name="Ewering C."/>
            <person name="Poetter M."/>
            <person name="Schwartz E."/>
            <person name="Strittmatter A."/>
            <person name="Voss I."/>
            <person name="Gottschalk G."/>
            <person name="Steinbuechel A."/>
            <person name="Friedrich B."/>
            <person name="Bowien B."/>
        </authorList>
    </citation>
    <scope>NUCLEOTIDE SEQUENCE [LARGE SCALE GENOMIC DNA]</scope>
    <source>
        <strain>ATCC 17699 / DSM 428 / KCTC 22496 / NCIMB 10442 / H16 / Stanier 337</strain>
    </source>
</reference>
<comment type="function">
    <text evidence="1">Catalyzes the transfer of a methyl group from 5-methyltetrahydrofolate to homocysteine resulting in methionine formation.</text>
</comment>
<comment type="catalytic activity">
    <reaction evidence="1">
        <text>5-methyltetrahydropteroyltri-L-glutamate + L-homocysteine = tetrahydropteroyltri-L-glutamate + L-methionine</text>
        <dbReference type="Rhea" id="RHEA:21196"/>
        <dbReference type="ChEBI" id="CHEBI:57844"/>
        <dbReference type="ChEBI" id="CHEBI:58140"/>
        <dbReference type="ChEBI" id="CHEBI:58199"/>
        <dbReference type="ChEBI" id="CHEBI:58207"/>
        <dbReference type="EC" id="2.1.1.14"/>
    </reaction>
</comment>
<comment type="cofactor">
    <cofactor evidence="1">
        <name>Zn(2+)</name>
        <dbReference type="ChEBI" id="CHEBI:29105"/>
    </cofactor>
    <text evidence="1">Binds 1 zinc ion per subunit.</text>
</comment>
<comment type="pathway">
    <text evidence="1">Amino-acid biosynthesis; L-methionine biosynthesis via de novo pathway; L-methionine from L-homocysteine (MetE route): step 1/1.</text>
</comment>
<comment type="similarity">
    <text evidence="1">Belongs to the vitamin-B12 independent methionine synthase family.</text>
</comment>
<sequence>MARTHILGFPRIGERRELKFAQEAFWRGDRTEAELRDVAAQLRRRHWQLQADRGLDTVATGDFAYYDQMLSLTALLGALPRRFGLDPARLTLTQYFELARGNREQPAMEMTKWFDTNYHYLVPELDAETTFDGGPAWFFEEADEALALGLRARPVLIGPVTYLWLSKSHVAGFDRLALLPQLLQGYRRILDQLKARGIEWVQIDEPALCLDLEPAWLDAFDTAYAALREAGPKLLLATYFDTAADHAQRAAALPVDGFHIDLVRAPEQLAAWQAALPAHAVLSLGVIDGRNIWRTDLRRVLDTLRPVQAALGERLWLAPSCSLLHVPVSLAHEVRLDVELKSWLAFATEKLDELSVLGRALNQGDAVVAEALAASDAAQASRRASRRVVNPRVQQRLAAVSAGMADRASPFAERIERQRQALQLPLLPTTTIGSFPQTAAIRQTRAAFKRGEIGALEYLERIRAEIAVAVRKQEALGLDVLVHGEAERNDMVEYFGEQLCGYGFTENGWVQSYGSRCVKPPVIYGDVYRPEPMTVDTARYAQSLTERPMKGMLTGPITMLQWSFVRDDQPRATTARQLALAIRDEVCDLEQAGIRVIQIDEPALREGLPLRRADWDAYLDWAVTAFRLSASGVQDQTQIHTHMCYAEFNDILPAIAAMDADVITIETSRSAMELLEGFGDFDYPNEIGPGVYDIHSPRVPSVQAMERLLDRACEVVPPQRLWVNPDCGLKTRGWEETEAALANMVSAARALRARLSARGATTWKRLSKPAAATAAAVPHAGNACTACATHAN</sequence>
<gene>
    <name evidence="1" type="primary">metE</name>
    <name type="ordered locus">H16_B1581</name>
</gene>
<organism>
    <name type="scientific">Cupriavidus necator (strain ATCC 17699 / DSM 428 / KCTC 22496 / NCIMB 10442 / H16 / Stanier 337)</name>
    <name type="common">Ralstonia eutropha</name>
    <dbReference type="NCBI Taxonomy" id="381666"/>
    <lineage>
        <taxon>Bacteria</taxon>
        <taxon>Pseudomonadati</taxon>
        <taxon>Pseudomonadota</taxon>
        <taxon>Betaproteobacteria</taxon>
        <taxon>Burkholderiales</taxon>
        <taxon>Burkholderiaceae</taxon>
        <taxon>Cupriavidus</taxon>
    </lineage>
</organism>
<proteinExistence type="inferred from homology"/>
<accession>Q0K0V6</accession>
<name>METE_CUPNH</name>
<feature type="chain" id="PRO_1000071615" description="5-methyltetrahydropteroyltriglutamate--homocysteine methyltransferase">
    <location>
        <begin position="1"/>
        <end position="792"/>
    </location>
</feature>
<feature type="active site" description="Proton donor" evidence="1">
    <location>
        <position position="695"/>
    </location>
</feature>
<feature type="binding site" evidence="1">
    <location>
        <begin position="16"/>
        <end position="19"/>
    </location>
    <ligand>
        <name>5-methyltetrahydropteroyltri-L-glutamate</name>
        <dbReference type="ChEBI" id="CHEBI:58207"/>
    </ligand>
</feature>
<feature type="binding site" evidence="1">
    <location>
        <position position="112"/>
    </location>
    <ligand>
        <name>5-methyltetrahydropteroyltri-L-glutamate</name>
        <dbReference type="ChEBI" id="CHEBI:58207"/>
    </ligand>
</feature>
<feature type="binding site" evidence="1">
    <location>
        <begin position="432"/>
        <end position="434"/>
    </location>
    <ligand>
        <name>L-homocysteine</name>
        <dbReference type="ChEBI" id="CHEBI:58199"/>
    </ligand>
</feature>
<feature type="binding site" evidence="1">
    <location>
        <begin position="432"/>
        <end position="434"/>
    </location>
    <ligand>
        <name>L-methionine</name>
        <dbReference type="ChEBI" id="CHEBI:57844"/>
    </ligand>
</feature>
<feature type="binding site" evidence="1">
    <location>
        <position position="485"/>
    </location>
    <ligand>
        <name>L-homocysteine</name>
        <dbReference type="ChEBI" id="CHEBI:58199"/>
    </ligand>
</feature>
<feature type="binding site" evidence="1">
    <location>
        <position position="485"/>
    </location>
    <ligand>
        <name>L-methionine</name>
        <dbReference type="ChEBI" id="CHEBI:57844"/>
    </ligand>
</feature>
<feature type="binding site" evidence="1">
    <location>
        <begin position="516"/>
        <end position="517"/>
    </location>
    <ligand>
        <name>5-methyltetrahydropteroyltri-L-glutamate</name>
        <dbReference type="ChEBI" id="CHEBI:58207"/>
    </ligand>
</feature>
<feature type="binding site" evidence="1">
    <location>
        <position position="562"/>
    </location>
    <ligand>
        <name>5-methyltetrahydropteroyltri-L-glutamate</name>
        <dbReference type="ChEBI" id="CHEBI:58207"/>
    </ligand>
</feature>
<feature type="binding site" evidence="1">
    <location>
        <position position="600"/>
    </location>
    <ligand>
        <name>L-homocysteine</name>
        <dbReference type="ChEBI" id="CHEBI:58199"/>
    </ligand>
</feature>
<feature type="binding site" evidence="1">
    <location>
        <position position="600"/>
    </location>
    <ligand>
        <name>L-methionine</name>
        <dbReference type="ChEBI" id="CHEBI:57844"/>
    </ligand>
</feature>
<feature type="binding site" evidence="1">
    <location>
        <position position="606"/>
    </location>
    <ligand>
        <name>5-methyltetrahydropteroyltri-L-glutamate</name>
        <dbReference type="ChEBI" id="CHEBI:58207"/>
    </ligand>
</feature>
<feature type="binding site" evidence="1">
    <location>
        <position position="642"/>
    </location>
    <ligand>
        <name>Zn(2+)</name>
        <dbReference type="ChEBI" id="CHEBI:29105"/>
        <note>catalytic</note>
    </ligand>
</feature>
<feature type="binding site" evidence="1">
    <location>
        <position position="644"/>
    </location>
    <ligand>
        <name>Zn(2+)</name>
        <dbReference type="ChEBI" id="CHEBI:29105"/>
        <note>catalytic</note>
    </ligand>
</feature>
<feature type="binding site" evidence="1">
    <location>
        <position position="666"/>
    </location>
    <ligand>
        <name>Zn(2+)</name>
        <dbReference type="ChEBI" id="CHEBI:29105"/>
        <note>catalytic</note>
    </ligand>
</feature>
<feature type="binding site" evidence="1">
    <location>
        <position position="727"/>
    </location>
    <ligand>
        <name>Zn(2+)</name>
        <dbReference type="ChEBI" id="CHEBI:29105"/>
        <note>catalytic</note>
    </ligand>
</feature>
<keyword id="KW-0028">Amino-acid biosynthesis</keyword>
<keyword id="KW-0479">Metal-binding</keyword>
<keyword id="KW-0486">Methionine biosynthesis</keyword>
<keyword id="KW-0489">Methyltransferase</keyword>
<keyword id="KW-1185">Reference proteome</keyword>
<keyword id="KW-0677">Repeat</keyword>
<keyword id="KW-0808">Transferase</keyword>
<keyword id="KW-0862">Zinc</keyword>